<protein>
    <recommendedName>
        <fullName>leu operon leader peptide</fullName>
    </recommendedName>
    <alternativeName>
        <fullName>leu operon attenuator peptide</fullName>
    </alternativeName>
</protein>
<evidence type="ECO:0000250" key="1"/>
<keyword id="KW-0028">Amino-acid biosynthesis</keyword>
<keyword id="KW-0100">Branched-chain amino acid biosynthesis</keyword>
<keyword id="KW-0428">Leader peptide</keyword>
<keyword id="KW-0432">Leucine biosynthesis</keyword>
<keyword id="KW-1185">Reference proteome</keyword>
<reference key="1">
    <citation type="journal article" date="2002" name="Nucleic Acids Res.">
        <title>Genome sequence of Shigella flexneri 2a: insights into pathogenicity through comparison with genomes of Escherichia coli K12 and O157.</title>
        <authorList>
            <person name="Jin Q."/>
            <person name="Yuan Z."/>
            <person name="Xu J."/>
            <person name="Wang Y."/>
            <person name="Shen Y."/>
            <person name="Lu W."/>
            <person name="Wang J."/>
            <person name="Liu H."/>
            <person name="Yang J."/>
            <person name="Yang F."/>
            <person name="Zhang X."/>
            <person name="Zhang J."/>
            <person name="Yang G."/>
            <person name="Wu H."/>
            <person name="Qu D."/>
            <person name="Dong J."/>
            <person name="Sun L."/>
            <person name="Xue Y."/>
            <person name="Zhao A."/>
            <person name="Gao Y."/>
            <person name="Zhu J."/>
            <person name="Kan B."/>
            <person name="Ding K."/>
            <person name="Chen S."/>
            <person name="Cheng H."/>
            <person name="Yao Z."/>
            <person name="He B."/>
            <person name="Chen R."/>
            <person name="Ma D."/>
            <person name="Qiang B."/>
            <person name="Wen Y."/>
            <person name="Hou Y."/>
            <person name="Yu J."/>
        </authorList>
    </citation>
    <scope>NUCLEOTIDE SEQUENCE [LARGE SCALE GENOMIC DNA]</scope>
    <source>
        <strain>301 / Serotype 2a</strain>
    </source>
</reference>
<reference key="2">
    <citation type="journal article" date="2003" name="Infect. Immun.">
        <title>Complete genome sequence and comparative genomics of Shigella flexneri serotype 2a strain 2457T.</title>
        <authorList>
            <person name="Wei J."/>
            <person name="Goldberg M.B."/>
            <person name="Burland V."/>
            <person name="Venkatesan M.M."/>
            <person name="Deng W."/>
            <person name="Fournier G."/>
            <person name="Mayhew G.F."/>
            <person name="Plunkett G. III"/>
            <person name="Rose D.J."/>
            <person name="Darling A."/>
            <person name="Mau B."/>
            <person name="Perna N.T."/>
            <person name="Payne S.M."/>
            <person name="Runyen-Janecky L.J."/>
            <person name="Zhou S."/>
            <person name="Schwartz D.C."/>
            <person name="Blattner F.R."/>
        </authorList>
    </citation>
    <scope>NUCLEOTIDE SEQUENCE [LARGE SCALE GENOMIC DNA]</scope>
    <source>
        <strain>ATCC 700930 / 2457T / Serotype 2a</strain>
    </source>
</reference>
<proteinExistence type="inferred from homology"/>
<feature type="peptide" id="PRO_0000044000" description="leu operon leader peptide">
    <location>
        <begin position="1"/>
        <end position="28"/>
    </location>
</feature>
<name>LPL_SHIFL</name>
<sequence length="28" mass="3146">MTHIVRFIGLLLLNASSLRGRRVSGIQH</sequence>
<dbReference type="EMBL" id="AE005674">
    <property type="protein sequence ID" value="AAN41735.1"/>
    <property type="molecule type" value="Genomic_DNA"/>
</dbReference>
<dbReference type="EMBL" id="AE014073">
    <property type="protein sequence ID" value="AAP15616.1"/>
    <property type="molecule type" value="Genomic_DNA"/>
</dbReference>
<dbReference type="RefSeq" id="NP_706028.1">
    <property type="nucleotide sequence ID" value="NC_004337.2"/>
</dbReference>
<dbReference type="RefSeq" id="WP_001300467.1">
    <property type="nucleotide sequence ID" value="NZ_WPGW01000005.1"/>
</dbReference>
<dbReference type="STRING" id="198214.SF0070"/>
<dbReference type="PaxDb" id="198214-SF0070"/>
<dbReference type="GeneID" id="1024519"/>
<dbReference type="GeneID" id="93777360"/>
<dbReference type="KEGG" id="sfl:SF0070"/>
<dbReference type="KEGG" id="sfx:S0072"/>
<dbReference type="PATRIC" id="fig|623.157.peg.4607"/>
<dbReference type="HOGENOM" id="CLU_221572_0_0_6"/>
<dbReference type="Proteomes" id="UP000001006">
    <property type="component" value="Chromosome"/>
</dbReference>
<dbReference type="Proteomes" id="UP000002673">
    <property type="component" value="Chromosome"/>
</dbReference>
<dbReference type="GO" id="GO:0009098">
    <property type="term" value="P:L-leucine biosynthetic process"/>
    <property type="evidence" value="ECO:0007669"/>
    <property type="project" value="UniProtKB-KW"/>
</dbReference>
<dbReference type="InterPro" id="IPR012570">
    <property type="entry name" value="Leu_leader"/>
</dbReference>
<dbReference type="NCBIfam" id="NF007397">
    <property type="entry name" value="PRK09925.1"/>
    <property type="match status" value="1"/>
</dbReference>
<dbReference type="Pfam" id="PF08054">
    <property type="entry name" value="Leu_leader"/>
    <property type="match status" value="1"/>
</dbReference>
<accession>P0AD82</accession>
<accession>P09149</accession>
<accession>Q8VSS2</accession>
<accession>Q8VSS3</accession>
<organism>
    <name type="scientific">Shigella flexneri</name>
    <dbReference type="NCBI Taxonomy" id="623"/>
    <lineage>
        <taxon>Bacteria</taxon>
        <taxon>Pseudomonadati</taxon>
        <taxon>Pseudomonadota</taxon>
        <taxon>Gammaproteobacteria</taxon>
        <taxon>Enterobacterales</taxon>
        <taxon>Enterobacteriaceae</taxon>
        <taxon>Shigella</taxon>
    </lineage>
</organism>
<gene>
    <name type="primary">leuL</name>
    <name type="ordered locus">SF0070</name>
    <name type="ordered locus">S0072</name>
</gene>
<comment type="function">
    <text evidence="1">Involved in control of the biosynthesis of leucine.</text>
</comment>